<comment type="function">
    <text evidence="1">Component of the cytochrome c oxidase, the last enzyme in the mitochondrial electron transport chain which drives oxidative phosphorylation. The respiratory chain contains 3 multisubunit complexes succinate dehydrogenase (complex II, CII), ubiquinol-cytochrome c oxidoreductase (cytochrome b-c1 complex, complex III, CIII) and cytochrome c oxidase (complex IV, CIV), that cooperate to transfer electrons derived from NADH and succinate to molecular oxygen, creating an electrochemical gradient over the inner membrane that drives transmembrane transport and the ATP synthase. Cytochrome c oxidase is the component of the respiratory chain that catalyzes the reduction of oxygen to water. Electrons originating from reduced cytochrome c in the intermembrane space (IMS) are transferred via the dinuclear copper A center (CU(A)) of subunit 2 and heme A of subunit 1 to the active site in subunit 1, a binuclear center (BNC) formed by heme A3 and copper B (CU(B)). The BNC reduces molecular oxygen to 2 water molecules using 4 electrons from cytochrome c in the IMS and 4 protons from the mitochondrial matrix.</text>
</comment>
<comment type="catalytic activity">
    <reaction evidence="1">
        <text>4 Fe(II)-[cytochrome c] + O2 + 8 H(+)(in) = 4 Fe(III)-[cytochrome c] + 2 H2O + 4 H(+)(out)</text>
        <dbReference type="Rhea" id="RHEA:11436"/>
        <dbReference type="Rhea" id="RHEA-COMP:10350"/>
        <dbReference type="Rhea" id="RHEA-COMP:14399"/>
        <dbReference type="ChEBI" id="CHEBI:15377"/>
        <dbReference type="ChEBI" id="CHEBI:15378"/>
        <dbReference type="ChEBI" id="CHEBI:15379"/>
        <dbReference type="ChEBI" id="CHEBI:29033"/>
        <dbReference type="ChEBI" id="CHEBI:29034"/>
        <dbReference type="EC" id="7.1.1.9"/>
    </reaction>
    <physiologicalReaction direction="left-to-right" evidence="1">
        <dbReference type="Rhea" id="RHEA:11437"/>
    </physiologicalReaction>
</comment>
<comment type="subunit">
    <text evidence="1">Component of the cytochrome c oxidase (complex IV, CIV), a multisubunit enzyme composed of a catalytic core of 3 subunits and several supernumerary subunits. The complex exists as a monomer or a dimer and forms supercomplexes (SCs) in the inner mitochondrial membrane with ubiquinol-cytochrome c oxidoreductase (cytochrome b-c1 complex, complex III, CIII).</text>
</comment>
<comment type="subcellular location">
    <subcellularLocation>
        <location evidence="1">Mitochondrion inner membrane</location>
        <topology evidence="1">Multi-pass membrane protein</topology>
    </subcellularLocation>
</comment>
<comment type="similarity">
    <text evidence="3">Belongs to the cytochrome c oxidase subunit 3 family.</text>
</comment>
<gene>
    <name type="primary">COX3</name>
</gene>
<reference key="1">
    <citation type="journal article" date="1995" name="J. Mol. Evol.">
        <title>Molecular phylogeny of Allomyces macrogynus: congruency between nuclear ribosomal RNA- and mitochondrial protein-based trees.</title>
        <authorList>
            <person name="Paquin B."/>
            <person name="Forget L."/>
            <person name="Roewer I."/>
            <person name="Lang B.F."/>
        </authorList>
    </citation>
    <scope>NUCLEOTIDE SEQUENCE</scope>
    <source>
        <strain>DAOM 148428</strain>
    </source>
</reference>
<name>COX3_RHIST</name>
<protein>
    <recommendedName>
        <fullName>Cytochrome c oxidase subunit 3</fullName>
        <ecNumber>7.1.1.9</ecNumber>
    </recommendedName>
    <alternativeName>
        <fullName>Cytochrome c oxidase polypeptide III</fullName>
    </alternativeName>
</protein>
<geneLocation type="mitochondrion"/>
<proteinExistence type="inferred from homology"/>
<accession>P80441</accession>
<dbReference type="EC" id="7.1.1.9"/>
<dbReference type="SMR" id="P80441"/>
<dbReference type="GO" id="GO:0005743">
    <property type="term" value="C:mitochondrial inner membrane"/>
    <property type="evidence" value="ECO:0007669"/>
    <property type="project" value="UniProtKB-SubCell"/>
</dbReference>
<dbReference type="GO" id="GO:0004129">
    <property type="term" value="F:cytochrome-c oxidase activity"/>
    <property type="evidence" value="ECO:0007669"/>
    <property type="project" value="UniProtKB-EC"/>
</dbReference>
<dbReference type="GO" id="GO:0006123">
    <property type="term" value="P:mitochondrial electron transport, cytochrome c to oxygen"/>
    <property type="evidence" value="ECO:0007669"/>
    <property type="project" value="TreeGrafter"/>
</dbReference>
<dbReference type="CDD" id="cd01665">
    <property type="entry name" value="Cyt_c_Oxidase_III"/>
    <property type="match status" value="1"/>
</dbReference>
<dbReference type="FunFam" id="1.10.287.70:FF:000082">
    <property type="entry name" value="Cytochrome c oxidase subunit 3"/>
    <property type="match status" value="1"/>
</dbReference>
<dbReference type="FunFam" id="1.20.120.80:FF:000002">
    <property type="entry name" value="Cytochrome c oxidase subunit 3"/>
    <property type="match status" value="1"/>
</dbReference>
<dbReference type="Gene3D" id="1.10.287.70">
    <property type="match status" value="1"/>
</dbReference>
<dbReference type="Gene3D" id="1.20.120.80">
    <property type="entry name" value="Cytochrome c oxidase, subunit III, four-helix bundle"/>
    <property type="match status" value="1"/>
</dbReference>
<dbReference type="InterPro" id="IPR024791">
    <property type="entry name" value="Cyt_c/ubiquinol_Oxase_su3"/>
</dbReference>
<dbReference type="InterPro" id="IPR033945">
    <property type="entry name" value="Cyt_c_oxase_su3_dom"/>
</dbReference>
<dbReference type="InterPro" id="IPR000298">
    <property type="entry name" value="Cyt_c_oxidase-like_su3"/>
</dbReference>
<dbReference type="InterPro" id="IPR035973">
    <property type="entry name" value="Cyt_c_oxidase_su3-like_sf"/>
</dbReference>
<dbReference type="InterPro" id="IPR013833">
    <property type="entry name" value="Cyt_c_oxidase_su3_a-hlx"/>
</dbReference>
<dbReference type="PANTHER" id="PTHR11403:SF7">
    <property type="entry name" value="CYTOCHROME C OXIDASE SUBUNIT 3"/>
    <property type="match status" value="1"/>
</dbReference>
<dbReference type="PANTHER" id="PTHR11403">
    <property type="entry name" value="CYTOCHROME C OXIDASE SUBUNIT III"/>
    <property type="match status" value="1"/>
</dbReference>
<dbReference type="Pfam" id="PF00510">
    <property type="entry name" value="COX3"/>
    <property type="match status" value="1"/>
</dbReference>
<dbReference type="SUPFAM" id="SSF81452">
    <property type="entry name" value="Cytochrome c oxidase subunit III-like"/>
    <property type="match status" value="1"/>
</dbReference>
<dbReference type="PROSITE" id="PS50253">
    <property type="entry name" value="COX3"/>
    <property type="match status" value="1"/>
</dbReference>
<keyword id="KW-0472">Membrane</keyword>
<keyword id="KW-0496">Mitochondrion</keyword>
<keyword id="KW-0999">Mitochondrion inner membrane</keyword>
<keyword id="KW-1278">Translocase</keyword>
<keyword id="KW-0812">Transmembrane</keyword>
<keyword id="KW-1133">Transmembrane helix</keyword>
<evidence type="ECO:0000250" key="1">
    <source>
        <dbReference type="UniProtKB" id="P00420"/>
    </source>
</evidence>
<evidence type="ECO:0000255" key="2"/>
<evidence type="ECO:0000305" key="3"/>
<feature type="chain" id="PRO_0000183846" description="Cytochrome c oxidase subunit 3">
    <location>
        <begin position="1"/>
        <end position="281"/>
    </location>
</feature>
<feature type="transmembrane region" description="Helical" evidence="2">
    <location>
        <begin position="34"/>
        <end position="54"/>
    </location>
</feature>
<feature type="transmembrane region" description="Helical" evidence="2">
    <location>
        <begin position="59"/>
        <end position="79"/>
    </location>
</feature>
<feature type="transmembrane region" description="Helical" evidence="2">
    <location>
        <begin position="103"/>
        <end position="123"/>
    </location>
</feature>
<feature type="transmembrane region" description="Helical" evidence="2">
    <location>
        <begin position="148"/>
        <end position="168"/>
    </location>
</feature>
<feature type="transmembrane region" description="Helical" evidence="2">
    <location>
        <begin position="179"/>
        <end position="199"/>
    </location>
</feature>
<feature type="transmembrane region" description="Helical" evidence="2">
    <location>
        <begin position="220"/>
        <end position="240"/>
    </location>
</feature>
<feature type="transmembrane region" description="Helical" evidence="2">
    <location>
        <begin position="259"/>
        <end position="279"/>
    </location>
</feature>
<organism>
    <name type="scientific">Rhizopus stolonifer</name>
    <name type="common">Rhizopus nigricans</name>
    <dbReference type="NCBI Taxonomy" id="4846"/>
    <lineage>
        <taxon>Eukaryota</taxon>
        <taxon>Fungi</taxon>
        <taxon>Fungi incertae sedis</taxon>
        <taxon>Mucoromycota</taxon>
        <taxon>Mucoromycotina</taxon>
        <taxon>Mucoromycetes</taxon>
        <taxon>Mucorales</taxon>
        <taxon>Mucorineae</taxon>
        <taxon>Rhizopodaceae</taxon>
        <taxon>Rhizopus</taxon>
    </lineage>
</organism>
<sequence length="281" mass="31652">MIEMYDRNYIYNMTTKIMNRSVQAHPFHLVEASPWPIAVSFSLLVVTLSGVMTFQGYSNGLFLLTLGFISLVSTMTLWFKDISREGTFQGHHTFAVQKGLSLGFVLFVVSEVFFFISIFWAFFHSALAPTVELGAHWPPAGIETLNPWEVPLLNTVILLSSGATVTYAHHANPSNRAGVIYGLIATIVLATVFTGFQGFEYYNAPFTFSDGVYGSTFYMATGFHGIHVLVGTIFLTVGLFRVLSYHLTDHHHLGFEQAILYWHFVDVVWLFLFISVYWWGG</sequence>